<feature type="chain" id="PRO_0000077550" description="Divinyl chlorophyll a/b light-harvesting protein PcbB">
    <location>
        <begin position="1"/>
        <end position="352"/>
    </location>
</feature>
<feature type="transmembrane region" description="Helical" evidence="3">
    <location>
        <begin position="27"/>
        <end position="47"/>
    </location>
</feature>
<feature type="transmembrane region" description="Helical" evidence="3">
    <location>
        <begin position="89"/>
        <end position="109"/>
    </location>
</feature>
<feature type="transmembrane region" description="Helical" evidence="3">
    <location>
        <begin position="142"/>
        <end position="162"/>
    </location>
</feature>
<feature type="transmembrane region" description="Helical" evidence="3">
    <location>
        <begin position="203"/>
        <end position="223"/>
    </location>
</feature>
<feature type="transmembrane region" description="Helical" evidence="3">
    <location>
        <begin position="243"/>
        <end position="263"/>
    </location>
</feature>
<feature type="transmembrane region" description="Helical" evidence="3">
    <location>
        <begin position="307"/>
        <end position="327"/>
    </location>
</feature>
<name>PCBB_PROMT</name>
<organism>
    <name type="scientific">Prochlorococcus marinus (strain NATL2A)</name>
    <dbReference type="NCBI Taxonomy" id="59920"/>
    <lineage>
        <taxon>Bacteria</taxon>
        <taxon>Bacillati</taxon>
        <taxon>Cyanobacteriota</taxon>
        <taxon>Cyanophyceae</taxon>
        <taxon>Synechococcales</taxon>
        <taxon>Prochlorococcaceae</taxon>
        <taxon>Prochlorococcus</taxon>
    </lineage>
</organism>
<protein>
    <recommendedName>
        <fullName>Divinyl chlorophyll a/b light-harvesting protein PcbB</fullName>
    </recommendedName>
</protein>
<sequence>MQTYGNPSVTYDWYAGNSGTANRSGKFIAAHAAHAGLMMFWAGAFTLFELARYDSSVAMGNQNLICLPHLAQLGIGGIENGVITEPYGCTVIAVLHLIFSGVLGAGGILHSTRYDGDLGNYPEGSRPKKFDFEWDDPDKLTFILGHHLIFLGLANIQFVEWAQYHGIWDTALGATRTVSYNLDLGMIWNHQADFLQITSLEDVMGGHAFLAFFQIIGGAFHIITKQFGEYTEFKGKGLLSAEAVLSYSLAGVGYCALVAAFWSSTNTTVYSTEFFGEVLQLKFDFAPYFVDTDPSLAAGAHTARAWLANVHFYLGFFFIQGHLWHALRAMGFDFRRVGKAFDNMENAKITNG</sequence>
<reference key="1">
    <citation type="journal article" date="2007" name="PLoS Genet.">
        <title>Patterns and implications of gene gain and loss in the evolution of Prochlorococcus.</title>
        <authorList>
            <person name="Kettler G.C."/>
            <person name="Martiny A.C."/>
            <person name="Huang K."/>
            <person name="Zucker J."/>
            <person name="Coleman M.L."/>
            <person name="Rodrigue S."/>
            <person name="Chen F."/>
            <person name="Lapidus A."/>
            <person name="Ferriera S."/>
            <person name="Johnson J."/>
            <person name="Steglich C."/>
            <person name="Church G.M."/>
            <person name="Richardson P."/>
            <person name="Chisholm S.W."/>
        </authorList>
    </citation>
    <scope>NUCLEOTIDE SEQUENCE [LARGE SCALE GENOMIC DNA]</scope>
    <source>
        <strain>NATL2A</strain>
    </source>
</reference>
<proteinExistence type="inferred from homology"/>
<dbReference type="EMBL" id="CP000095">
    <property type="protein sequence ID" value="AAZ57707.1"/>
    <property type="molecule type" value="Genomic_DNA"/>
</dbReference>
<dbReference type="RefSeq" id="WP_011293749.1">
    <property type="nucleotide sequence ID" value="NC_007335.2"/>
</dbReference>
<dbReference type="SMR" id="Q46LC1"/>
<dbReference type="STRING" id="59920.PMN2A_0215"/>
<dbReference type="KEGG" id="pmn:PMN2A_0215"/>
<dbReference type="HOGENOM" id="CLU_028310_0_0_3"/>
<dbReference type="OrthoDB" id="9429529at2"/>
<dbReference type="PhylomeDB" id="Q46LC1"/>
<dbReference type="Proteomes" id="UP000002535">
    <property type="component" value="Chromosome"/>
</dbReference>
<dbReference type="GO" id="GO:0009522">
    <property type="term" value="C:photosystem I"/>
    <property type="evidence" value="ECO:0007669"/>
    <property type="project" value="UniProtKB-KW"/>
</dbReference>
<dbReference type="GO" id="GO:0009523">
    <property type="term" value="C:photosystem II"/>
    <property type="evidence" value="ECO:0007669"/>
    <property type="project" value="UniProtKB-KW"/>
</dbReference>
<dbReference type="GO" id="GO:0031676">
    <property type="term" value="C:plasma membrane-derived thylakoid membrane"/>
    <property type="evidence" value="ECO:0007669"/>
    <property type="project" value="UniProtKB-SubCell"/>
</dbReference>
<dbReference type="GO" id="GO:0016168">
    <property type="term" value="F:chlorophyll binding"/>
    <property type="evidence" value="ECO:0007669"/>
    <property type="project" value="UniProtKB-KW"/>
</dbReference>
<dbReference type="GO" id="GO:0009767">
    <property type="term" value="P:photosynthetic electron transport chain"/>
    <property type="evidence" value="ECO:0007669"/>
    <property type="project" value="InterPro"/>
</dbReference>
<dbReference type="InterPro" id="IPR000932">
    <property type="entry name" value="PS_antenna-like"/>
</dbReference>
<dbReference type="InterPro" id="IPR036001">
    <property type="entry name" value="PS_II_antenna-like_sf"/>
</dbReference>
<dbReference type="NCBIfam" id="TIGR03041">
    <property type="entry name" value="PS_antenn_a_b"/>
    <property type="match status" value="1"/>
</dbReference>
<dbReference type="Pfam" id="PF00421">
    <property type="entry name" value="PSII"/>
    <property type="match status" value="1"/>
</dbReference>
<dbReference type="SUPFAM" id="SSF161077">
    <property type="entry name" value="Photosystem II antenna protein-like"/>
    <property type="match status" value="1"/>
</dbReference>
<evidence type="ECO:0000250" key="1"/>
<evidence type="ECO:0000250" key="2">
    <source>
        <dbReference type="UniProtKB" id="Q6Q972"/>
    </source>
</evidence>
<evidence type="ECO:0000255" key="3"/>
<evidence type="ECO:0000303" key="4">
    <source>
    </source>
</evidence>
<evidence type="ECO:0000305" key="5"/>
<comment type="function">
    <text evidence="2">The antenna complex functions as a light receptor, it captures and delivers excitation energy to photosystems II and I. The Prochlorales pcb genes are not related to higher plant LHCs.</text>
</comment>
<comment type="cofactor">
    <cofactor evidence="2">
        <name>divinyl chlorophyll a</name>
        <dbReference type="ChEBI" id="CHEBI:73095"/>
    </cofactor>
</comment>
<comment type="cofactor">
    <cofactor evidence="2">
        <name>divinyl chlorophyll b</name>
        <dbReference type="ChEBI" id="CHEBI:73096"/>
    </cofactor>
</comment>
<comment type="subunit">
    <text evidence="2">The antenna complex consists of divinyl chlorophylls (a and b) and divinyl chlorophyll a/b binding proteins and binds more divinyl chlorophyll b than does the antenna complex from high-light-adapted Prochlorococcus.</text>
</comment>
<comment type="subcellular location">
    <subcellularLocation>
        <location evidence="2">Cellular thylakoid membrane</location>
        <topology evidence="1">Multi-pass membrane protein</topology>
    </subcellularLocation>
</comment>
<comment type="miscellaneous">
    <text evidence="4">This low-light-adapted strain contains 7 pcb genes.</text>
</comment>
<comment type="similarity">
    <text evidence="5">Belongs to the PsbB/PsbC family. IsiA/Pcb subfamily.</text>
</comment>
<gene>
    <name type="primary">pcbB</name>
    <name type="ordered locus">PMN2A_0215</name>
</gene>
<keyword id="KW-0148">Chlorophyll</keyword>
<keyword id="KW-0157">Chromophore</keyword>
<keyword id="KW-0472">Membrane</keyword>
<keyword id="KW-0602">Photosynthesis</keyword>
<keyword id="KW-0603">Photosystem I</keyword>
<keyword id="KW-0604">Photosystem II</keyword>
<keyword id="KW-1185">Reference proteome</keyword>
<keyword id="KW-0793">Thylakoid</keyword>
<keyword id="KW-0812">Transmembrane</keyword>
<keyword id="KW-1133">Transmembrane helix</keyword>
<accession>Q46LC1</accession>